<feature type="chain" id="PRO_1000142857" description="Large ribosomal subunit protein uL15">
    <location>
        <begin position="1"/>
        <end position="145"/>
    </location>
</feature>
<feature type="region of interest" description="Disordered" evidence="2">
    <location>
        <begin position="1"/>
        <end position="50"/>
    </location>
</feature>
<feature type="compositionally biased region" description="Gly residues" evidence="2">
    <location>
        <begin position="20"/>
        <end position="30"/>
    </location>
</feature>
<name>RL15_PHYAS</name>
<organism>
    <name type="scientific">Phytoplasma australiense</name>
    <dbReference type="NCBI Taxonomy" id="59748"/>
    <lineage>
        <taxon>Bacteria</taxon>
        <taxon>Bacillati</taxon>
        <taxon>Mycoplasmatota</taxon>
        <taxon>Mollicutes</taxon>
        <taxon>Acholeplasmatales</taxon>
        <taxon>Acholeplasmataceae</taxon>
        <taxon>Candidatus Phytoplasma</taxon>
        <taxon>16SrXII (Stolbur group)</taxon>
    </lineage>
</organism>
<accession>B1VAC9</accession>
<sequence>MLHTIKPVANARKTTKRLGRGPGSGTGKTSGKGHKGQLARSGKTLRPGFEGGQIPFFQRIPKRGFHNFAQKKYAVLNLTTLQNFPEDSVITPQLLLEKKIIKDPLSGIKVLGQGTLTKKLVVKASKFSRQAEASILAVGGKIEVI</sequence>
<proteinExistence type="inferred from homology"/>
<evidence type="ECO:0000255" key="1">
    <source>
        <dbReference type="HAMAP-Rule" id="MF_01341"/>
    </source>
</evidence>
<evidence type="ECO:0000256" key="2">
    <source>
        <dbReference type="SAM" id="MobiDB-lite"/>
    </source>
</evidence>
<evidence type="ECO:0000305" key="3"/>
<gene>
    <name evidence="1" type="primary">rplO</name>
    <name type="ordered locus">PA0568</name>
</gene>
<reference key="1">
    <citation type="journal article" date="2008" name="J. Bacteriol.">
        <title>Comparative genome analysis of 'Candidatus Phytoplasma australiense' (subgroup tuf-Australia I; rp-A) and 'Ca. Phytoplasma asteris' strains OY-M and AY-WB.</title>
        <authorList>
            <person name="Tran-Nguyen L.T."/>
            <person name="Kube M."/>
            <person name="Schneider B."/>
            <person name="Reinhardt R."/>
            <person name="Gibb K.S."/>
        </authorList>
    </citation>
    <scope>NUCLEOTIDE SEQUENCE [LARGE SCALE GENOMIC DNA]</scope>
</reference>
<protein>
    <recommendedName>
        <fullName evidence="1">Large ribosomal subunit protein uL15</fullName>
    </recommendedName>
    <alternativeName>
        <fullName evidence="3">50S ribosomal protein L15</fullName>
    </alternativeName>
</protein>
<comment type="function">
    <text evidence="1">Binds to the 23S rRNA.</text>
</comment>
<comment type="subunit">
    <text evidence="1">Part of the 50S ribosomal subunit.</text>
</comment>
<comment type="similarity">
    <text evidence="1">Belongs to the universal ribosomal protein uL15 family.</text>
</comment>
<dbReference type="EMBL" id="AM422018">
    <property type="protein sequence ID" value="CAM11902.1"/>
    <property type="molecule type" value="Genomic_DNA"/>
</dbReference>
<dbReference type="SMR" id="B1VAC9"/>
<dbReference type="STRING" id="59748.PA0568"/>
<dbReference type="KEGG" id="pal:PA0568"/>
<dbReference type="eggNOG" id="COG0200">
    <property type="taxonomic scope" value="Bacteria"/>
</dbReference>
<dbReference type="Proteomes" id="UP000008323">
    <property type="component" value="Chromosome"/>
</dbReference>
<dbReference type="GO" id="GO:0022625">
    <property type="term" value="C:cytosolic large ribosomal subunit"/>
    <property type="evidence" value="ECO:0007669"/>
    <property type="project" value="TreeGrafter"/>
</dbReference>
<dbReference type="GO" id="GO:0019843">
    <property type="term" value="F:rRNA binding"/>
    <property type="evidence" value="ECO:0007669"/>
    <property type="project" value="UniProtKB-UniRule"/>
</dbReference>
<dbReference type="GO" id="GO:0003735">
    <property type="term" value="F:structural constituent of ribosome"/>
    <property type="evidence" value="ECO:0007669"/>
    <property type="project" value="InterPro"/>
</dbReference>
<dbReference type="GO" id="GO:0006412">
    <property type="term" value="P:translation"/>
    <property type="evidence" value="ECO:0007669"/>
    <property type="project" value="UniProtKB-UniRule"/>
</dbReference>
<dbReference type="Gene3D" id="3.100.10.10">
    <property type="match status" value="1"/>
</dbReference>
<dbReference type="HAMAP" id="MF_01341">
    <property type="entry name" value="Ribosomal_uL15"/>
    <property type="match status" value="1"/>
</dbReference>
<dbReference type="InterPro" id="IPR030878">
    <property type="entry name" value="Ribosomal_uL15"/>
</dbReference>
<dbReference type="InterPro" id="IPR021131">
    <property type="entry name" value="Ribosomal_uL15/eL18"/>
</dbReference>
<dbReference type="InterPro" id="IPR036227">
    <property type="entry name" value="Ribosomal_uL15/eL18_sf"/>
</dbReference>
<dbReference type="InterPro" id="IPR005749">
    <property type="entry name" value="Ribosomal_uL15_bac-type"/>
</dbReference>
<dbReference type="InterPro" id="IPR001196">
    <property type="entry name" value="Ribosomal_uL15_CS"/>
</dbReference>
<dbReference type="NCBIfam" id="TIGR01071">
    <property type="entry name" value="rplO_bact"/>
    <property type="match status" value="1"/>
</dbReference>
<dbReference type="PANTHER" id="PTHR12934">
    <property type="entry name" value="50S RIBOSOMAL PROTEIN L15"/>
    <property type="match status" value="1"/>
</dbReference>
<dbReference type="PANTHER" id="PTHR12934:SF11">
    <property type="entry name" value="LARGE RIBOSOMAL SUBUNIT PROTEIN UL15M"/>
    <property type="match status" value="1"/>
</dbReference>
<dbReference type="Pfam" id="PF00828">
    <property type="entry name" value="Ribosomal_L27A"/>
    <property type="match status" value="1"/>
</dbReference>
<dbReference type="SUPFAM" id="SSF52080">
    <property type="entry name" value="Ribosomal proteins L15p and L18e"/>
    <property type="match status" value="1"/>
</dbReference>
<dbReference type="PROSITE" id="PS00475">
    <property type="entry name" value="RIBOSOMAL_L15"/>
    <property type="match status" value="1"/>
</dbReference>
<keyword id="KW-1185">Reference proteome</keyword>
<keyword id="KW-0687">Ribonucleoprotein</keyword>
<keyword id="KW-0689">Ribosomal protein</keyword>
<keyword id="KW-0694">RNA-binding</keyword>
<keyword id="KW-0699">rRNA-binding</keyword>